<keyword id="KW-0255">Endonuclease</keyword>
<keyword id="KW-0378">Hydrolase</keyword>
<keyword id="KW-0540">Nuclease</keyword>
<keyword id="KW-1185">Reference proteome</keyword>
<keyword id="KW-0694">RNA-binding</keyword>
<keyword id="KW-0819">tRNA processing</keyword>
<accession>P9WGZ2</accession>
<accession>L0TFN5</accession>
<accession>O53601</accession>
<accession>P0A5X8</accession>
<accession>Q50789</accession>
<reference key="1">
    <citation type="journal article" date="2002" name="J. Bacteriol.">
        <title>Whole-genome comparison of Mycobacterium tuberculosis clinical and laboratory strains.</title>
        <authorList>
            <person name="Fleischmann R.D."/>
            <person name="Alland D."/>
            <person name="Eisen J.A."/>
            <person name="Carpenter L."/>
            <person name="White O."/>
            <person name="Peterson J.D."/>
            <person name="DeBoy R.T."/>
            <person name="Dodson R.J."/>
            <person name="Gwinn M.L."/>
            <person name="Haft D.H."/>
            <person name="Hickey E.K."/>
            <person name="Kolonay J.F."/>
            <person name="Nelson W.C."/>
            <person name="Umayam L.A."/>
            <person name="Ermolaeva M.D."/>
            <person name="Salzberg S.L."/>
            <person name="Delcher A."/>
            <person name="Utterback T.R."/>
            <person name="Weidman J.F."/>
            <person name="Khouri H.M."/>
            <person name="Gill J."/>
            <person name="Mikula A."/>
            <person name="Bishai W."/>
            <person name="Jacobs W.R. Jr."/>
            <person name="Venter J.C."/>
            <person name="Fraser C.M."/>
        </authorList>
    </citation>
    <scope>NUCLEOTIDE SEQUENCE [LARGE SCALE GENOMIC DNA]</scope>
    <source>
        <strain>CDC 1551 / Oshkosh</strain>
    </source>
</reference>
<evidence type="ECO:0000255" key="1">
    <source>
        <dbReference type="HAMAP-Rule" id="MF_00227"/>
    </source>
</evidence>
<comment type="function">
    <text evidence="1">RNaseP catalyzes the removal of the 5'-leader sequence from pre-tRNA to produce the mature 5'-terminus. It can also cleave other RNA substrates such as 4.5S RNA. The protein component plays an auxiliary but essential role in vivo by binding to the 5'-leader sequence and broadening the substrate specificity of the ribozyme.</text>
</comment>
<comment type="catalytic activity">
    <reaction evidence="1">
        <text>Endonucleolytic cleavage of RNA, removing 5'-extranucleotides from tRNA precursor.</text>
        <dbReference type="EC" id="3.1.26.5"/>
    </reaction>
</comment>
<comment type="subunit">
    <text evidence="1">Consists of a catalytic RNA component (M1 or rnpB) and a protein subunit.</text>
</comment>
<comment type="similarity">
    <text evidence="1">Belongs to the RnpA family.</text>
</comment>
<dbReference type="EC" id="3.1.26.5" evidence="1"/>
<dbReference type="EMBL" id="AE000516">
    <property type="protein sequence ID" value="AAK48408.1"/>
    <property type="molecule type" value="Genomic_DNA"/>
</dbReference>
<dbReference type="PIR" id="C70852">
    <property type="entry name" value="C70852"/>
</dbReference>
<dbReference type="RefSeq" id="WP_003899767.1">
    <property type="nucleotide sequence ID" value="NZ_KK341228.1"/>
</dbReference>
<dbReference type="SMR" id="P9WGZ2"/>
<dbReference type="KEGG" id="mtc:MT4041"/>
<dbReference type="HOGENOM" id="CLU_117179_4_1_11"/>
<dbReference type="Proteomes" id="UP000001020">
    <property type="component" value="Chromosome"/>
</dbReference>
<dbReference type="GO" id="GO:0030677">
    <property type="term" value="C:ribonuclease P complex"/>
    <property type="evidence" value="ECO:0007669"/>
    <property type="project" value="TreeGrafter"/>
</dbReference>
<dbReference type="GO" id="GO:0042781">
    <property type="term" value="F:3'-tRNA processing endoribonuclease activity"/>
    <property type="evidence" value="ECO:0007669"/>
    <property type="project" value="TreeGrafter"/>
</dbReference>
<dbReference type="GO" id="GO:0004526">
    <property type="term" value="F:ribonuclease P activity"/>
    <property type="evidence" value="ECO:0007669"/>
    <property type="project" value="UniProtKB-UniRule"/>
</dbReference>
<dbReference type="GO" id="GO:0000049">
    <property type="term" value="F:tRNA binding"/>
    <property type="evidence" value="ECO:0007669"/>
    <property type="project" value="UniProtKB-UniRule"/>
</dbReference>
<dbReference type="GO" id="GO:0001682">
    <property type="term" value="P:tRNA 5'-leader removal"/>
    <property type="evidence" value="ECO:0007669"/>
    <property type="project" value="UniProtKB-UniRule"/>
</dbReference>
<dbReference type="FunFam" id="3.30.230.10:FF:000135">
    <property type="entry name" value="Ribonuclease P protein component"/>
    <property type="match status" value="1"/>
</dbReference>
<dbReference type="Gene3D" id="3.30.230.10">
    <property type="match status" value="1"/>
</dbReference>
<dbReference type="HAMAP" id="MF_00227">
    <property type="entry name" value="RNase_P"/>
    <property type="match status" value="1"/>
</dbReference>
<dbReference type="InterPro" id="IPR020568">
    <property type="entry name" value="Ribosomal_Su5_D2-typ_SF"/>
</dbReference>
<dbReference type="InterPro" id="IPR014721">
    <property type="entry name" value="Ribsml_uS5_D2-typ_fold_subgr"/>
</dbReference>
<dbReference type="InterPro" id="IPR000100">
    <property type="entry name" value="RNase_P"/>
</dbReference>
<dbReference type="InterPro" id="IPR020539">
    <property type="entry name" value="RNase_P_CS"/>
</dbReference>
<dbReference type="NCBIfam" id="TIGR00188">
    <property type="entry name" value="rnpA"/>
    <property type="match status" value="1"/>
</dbReference>
<dbReference type="PANTHER" id="PTHR33992">
    <property type="entry name" value="RIBONUCLEASE P PROTEIN COMPONENT"/>
    <property type="match status" value="1"/>
</dbReference>
<dbReference type="PANTHER" id="PTHR33992:SF1">
    <property type="entry name" value="RIBONUCLEASE P PROTEIN COMPONENT"/>
    <property type="match status" value="1"/>
</dbReference>
<dbReference type="Pfam" id="PF00825">
    <property type="entry name" value="Ribonuclease_P"/>
    <property type="match status" value="1"/>
</dbReference>
<dbReference type="SUPFAM" id="SSF54211">
    <property type="entry name" value="Ribosomal protein S5 domain 2-like"/>
    <property type="match status" value="1"/>
</dbReference>
<dbReference type="PROSITE" id="PS00648">
    <property type="entry name" value="RIBONUCLEASE_P"/>
    <property type="match status" value="1"/>
</dbReference>
<name>RNPA_MYCTO</name>
<gene>
    <name evidence="1" type="primary">rnpA</name>
    <name type="ordered locus">MT4041</name>
</gene>
<feature type="chain" id="PRO_0000428277" description="Ribonuclease P protein component">
    <location>
        <begin position="1"/>
        <end position="116"/>
    </location>
</feature>
<proteinExistence type="inferred from homology"/>
<sequence length="116" mass="13072">MLRARNRMRRSADFETTVKHGMRTVRSDMVVYWWRGSGGGPRVGLIIAKSVGSAVERHRVARRLRHVAGSIVKELHPSDHVVIRALPSSRHVSSARLEQQLRCGLRRAVELAGSDR</sequence>
<protein>
    <recommendedName>
        <fullName evidence="1">Ribonuclease P protein component</fullName>
        <shortName evidence="1">RNase P protein</shortName>
        <shortName evidence="1">RNaseP protein</shortName>
        <ecNumber evidence="1">3.1.26.5</ecNumber>
    </recommendedName>
    <alternativeName>
        <fullName evidence="1">Protein C5</fullName>
    </alternativeName>
</protein>
<organism>
    <name type="scientific">Mycobacterium tuberculosis (strain CDC 1551 / Oshkosh)</name>
    <dbReference type="NCBI Taxonomy" id="83331"/>
    <lineage>
        <taxon>Bacteria</taxon>
        <taxon>Bacillati</taxon>
        <taxon>Actinomycetota</taxon>
        <taxon>Actinomycetes</taxon>
        <taxon>Mycobacteriales</taxon>
        <taxon>Mycobacteriaceae</taxon>
        <taxon>Mycobacterium</taxon>
        <taxon>Mycobacterium tuberculosis complex</taxon>
    </lineage>
</organism>